<accession>Q80TD3</accession>
<organism>
    <name type="scientific">Mus musculus</name>
    <name type="common">Mouse</name>
    <dbReference type="NCBI Taxonomy" id="10090"/>
    <lineage>
        <taxon>Eukaryota</taxon>
        <taxon>Metazoa</taxon>
        <taxon>Chordata</taxon>
        <taxon>Craniata</taxon>
        <taxon>Vertebrata</taxon>
        <taxon>Euteleostomi</taxon>
        <taxon>Mammalia</taxon>
        <taxon>Eutheria</taxon>
        <taxon>Euarchontoglires</taxon>
        <taxon>Glires</taxon>
        <taxon>Rodentia</taxon>
        <taxon>Myomorpha</taxon>
        <taxon>Muroidea</taxon>
        <taxon>Muridae</taxon>
        <taxon>Murinae</taxon>
        <taxon>Mus</taxon>
        <taxon>Mus</taxon>
    </lineage>
</organism>
<evidence type="ECO:0000250" key="1">
    <source>
        <dbReference type="UniProtKB" id="Q8TF40"/>
    </source>
</evidence>
<evidence type="ECO:0000250" key="2">
    <source>
        <dbReference type="UniProtKB" id="Q9P278"/>
    </source>
</evidence>
<evidence type="ECO:0000255" key="3">
    <source>
        <dbReference type="PROSITE-ProRule" id="PRU01180"/>
    </source>
</evidence>
<evidence type="ECO:0000256" key="4">
    <source>
        <dbReference type="SAM" id="MobiDB-lite"/>
    </source>
</evidence>
<evidence type="ECO:0000269" key="5">
    <source>
    </source>
</evidence>
<evidence type="ECO:0000269" key="6">
    <source>
    </source>
</evidence>
<evidence type="ECO:0000269" key="7">
    <source>
    </source>
</evidence>
<evidence type="ECO:0000303" key="8">
    <source>
    </source>
</evidence>
<evidence type="ECO:0000303" key="9">
    <source>
    </source>
</evidence>
<evidence type="ECO:0000303" key="10">
    <source>
    </source>
</evidence>
<evidence type="ECO:0000305" key="11"/>
<evidence type="ECO:0000312" key="12">
    <source>
        <dbReference type="MGI" id="MGI:2683054"/>
    </source>
</evidence>
<evidence type="ECO:0007744" key="13">
    <source>
    </source>
</evidence>
<evidence type="ECO:0007744" key="14">
    <source>
    </source>
</evidence>
<proteinExistence type="evidence at protein level"/>
<comment type="function">
    <text evidence="1 2 5 6">Binding partner of the GTPase-activating protein FLCN: involved in the cellular response to amino acid availability by regulating the non-canonical mTORC1 signaling cascade controlling the MiT/TFE factors TFEB and TFE3 (PubMed:23582324). Required to promote FLCN recruitment to lysosomes and interaction with Rag GTPases, leading to activation of the non-canonical mTORC1 signaling (By similarity). In low-amino acid conditions, component of the lysosomal folliculin complex (LFC) on the membrane of lysosomes, which inhibits the GTPase-activating activity of FLCN, thereby inactivating mTORC1 and promoting nuclear translocation of TFEB and TFE3 (By similarity). Upon amino acid restimulation, disassembly of the LFC complex liberates the GTPase-activating activity of FLCN, leading to activation of mTORC1 and subsequent inactivation of TFEB and TFE3 (By similarity). Together with FLCN, regulates autophagy: following phosphorylation by ULK1, interacts with GABARAP and promotes autophagy (By similarity). In addition to its role in mTORC1 signaling, also acts as a co-chaperone of HSP90AA1/Hsp90: inhibits the ATPase activity of HSP90AA1/Hsp90, leading to activate both kinase and non-kinase client proteins of HSP90AA1/Hsp90 (By similarity). Acts as a scaffold to load client protein FLCN onto HSP90AA1/Hsp90 (By similarity). Competes with the activating co-chaperone AHSA1 for binding to HSP90AA1, thereby providing a reciprocal regulatory mechanism for chaperoning of client proteins (By similarity). May play a role in the signal transduction pathway of apoptosis induced by O6-methylguanine-mispaired lesions (PubMed:19137017).</text>
</comment>
<comment type="subunit">
    <text evidence="2">Homodimer and homomultimer. Heterodimer and heteromultimer with FNIP1. Interacts (via C-terminus) with FLCN (via C-terminus). Phosphorylated FLCN is preferentially bound. Component of the lysosomal folliculin complex (LFC), composed of FLCN, FNIP1 (or FNIP2), RagA/RRAGA or RagB/RRAGB GDP-bound, RagC/RRAGC or RagD/RRAGD GTP-bound, and Ragulator. Interacts with PRKAA1, PRKAB1 and PRKAG1 subunits of 5'-AMP-activated protein kinase. Interacts with HSP70, HSP90AA1, STIP1, PTGES3, CDC37, BRAF, GCR and CDK4.</text>
</comment>
<comment type="subcellular location">
    <subcellularLocation>
        <location evidence="2">Lysosome membrane</location>
    </subcellularLocation>
    <subcellularLocation>
        <location evidence="5">Cytoplasm</location>
    </subcellularLocation>
    <text evidence="2">Colocalizes with FLCN in the cytoplasm.</text>
</comment>
<comment type="PTM">
    <text evidence="2">Phosphorylated by AMPK.</text>
</comment>
<comment type="disruption phenotype">
    <text evidence="7">Mice lacking both Fnip1 and Fnip2 show enlarged polycystic kidneys.</text>
</comment>
<comment type="similarity">
    <text evidence="11">Belongs to the FNIP family.</text>
</comment>
<reference key="1">
    <citation type="journal article" date="2009" name="PLoS Biol.">
        <title>Lineage-specific biology revealed by a finished genome assembly of the mouse.</title>
        <authorList>
            <person name="Church D.M."/>
            <person name="Goodstadt L."/>
            <person name="Hillier L.W."/>
            <person name="Zody M.C."/>
            <person name="Goldstein S."/>
            <person name="She X."/>
            <person name="Bult C.J."/>
            <person name="Agarwala R."/>
            <person name="Cherry J.L."/>
            <person name="DiCuccio M."/>
            <person name="Hlavina W."/>
            <person name="Kapustin Y."/>
            <person name="Meric P."/>
            <person name="Maglott D."/>
            <person name="Birtle Z."/>
            <person name="Marques A.C."/>
            <person name="Graves T."/>
            <person name="Zhou S."/>
            <person name="Teague B."/>
            <person name="Potamousis K."/>
            <person name="Churas C."/>
            <person name="Place M."/>
            <person name="Herschleb J."/>
            <person name="Runnheim R."/>
            <person name="Forrest D."/>
            <person name="Amos-Landgraf J."/>
            <person name="Schwartz D.C."/>
            <person name="Cheng Z."/>
            <person name="Lindblad-Toh K."/>
            <person name="Eichler E.E."/>
            <person name="Ponting C.P."/>
        </authorList>
    </citation>
    <scope>NUCLEOTIDE SEQUENCE [LARGE SCALE GENOMIC DNA]</scope>
    <source>
        <strain>C57BL/6J</strain>
    </source>
</reference>
<reference key="2">
    <citation type="journal article" date="2003" name="DNA Res.">
        <title>Prediction of the coding sequences of mouse homologues of KIAA gene: II. The complete nucleotide sequences of 400 mouse KIAA-homologous cDNAs identified by screening of terminal sequences of cDNA clones randomly sampled from size-fractionated libraries.</title>
        <authorList>
            <person name="Okazaki N."/>
            <person name="Kikuno R."/>
            <person name="Ohara R."/>
            <person name="Inamoto S."/>
            <person name="Aizawa H."/>
            <person name="Yuasa S."/>
            <person name="Nakajima D."/>
            <person name="Nagase T."/>
            <person name="Ohara O."/>
            <person name="Koga H."/>
        </authorList>
    </citation>
    <scope>NUCLEOTIDE SEQUENCE [LARGE SCALE MRNA] OF 284-1108</scope>
    <source>
        <tissue>Brain</tissue>
    </source>
</reference>
<reference key="3">
    <citation type="journal article" date="2009" name="Immunity">
        <title>The phagosomal proteome in interferon-gamma-activated macrophages.</title>
        <authorList>
            <person name="Trost M."/>
            <person name="English L."/>
            <person name="Lemieux S."/>
            <person name="Courcelles M."/>
            <person name="Desjardins M."/>
            <person name="Thibault P."/>
        </authorList>
    </citation>
    <scope>PHOSPHORYLATION [LARGE SCALE ANALYSIS] AT SER-723</scope>
    <scope>IDENTIFICATION BY MASS SPECTROMETRY [LARGE SCALE ANALYSIS]</scope>
</reference>
<reference key="4">
    <citation type="journal article" date="2009" name="Oncogene">
        <title>A novel protein, MAPO1, that functions in apoptosis triggered by O6-methylguanine mispair in DNA.</title>
        <authorList>
            <person name="Komori K."/>
            <person name="Takagi Y."/>
            <person name="Sanada M."/>
            <person name="Lim T.H."/>
            <person name="Nakatsu Y."/>
            <person name="Tsuzuki T."/>
            <person name="Sekiguchi M."/>
            <person name="Hidaka M."/>
        </authorList>
    </citation>
    <scope>FUNCTION</scope>
    <scope>SUBCELLULAR LOCATION</scope>
</reference>
<reference key="5">
    <citation type="journal article" date="2010" name="Cell">
        <title>A tissue-specific atlas of mouse protein phosphorylation and expression.</title>
        <authorList>
            <person name="Huttlin E.L."/>
            <person name="Jedrychowski M.P."/>
            <person name="Elias J.E."/>
            <person name="Goswami T."/>
            <person name="Rad R."/>
            <person name="Beausoleil S.A."/>
            <person name="Villen J."/>
            <person name="Haas W."/>
            <person name="Sowa M.E."/>
            <person name="Gygi S.P."/>
        </authorList>
    </citation>
    <scope>PHOSPHORYLATION [LARGE SCALE ANALYSIS] AT SER-721 AND SER-723</scope>
    <scope>IDENTIFICATION BY MASS SPECTROMETRY [LARGE SCALE ANALYSIS]</scope>
    <source>
        <tissue>Testis</tissue>
    </source>
</reference>
<reference key="6">
    <citation type="journal article" date="2013" name="Cell">
        <title>Exit from pluripotency is gated by intracellular redistribution of the bHLH transcription factor Tfe3.</title>
        <authorList>
            <person name="Betschinger J."/>
            <person name="Nichols J."/>
            <person name="Dietmann S."/>
            <person name="Corrin P.D."/>
            <person name="Paddison P.J."/>
            <person name="Smith A."/>
        </authorList>
    </citation>
    <scope>FUNCTION</scope>
</reference>
<reference key="7">
    <citation type="journal article" date="2014" name="Mol. Cell. Proteomics">
        <title>Immunoaffinity enrichment and mass spectrometry analysis of protein methylation.</title>
        <authorList>
            <person name="Guo A."/>
            <person name="Gu H."/>
            <person name="Zhou J."/>
            <person name="Mulhern D."/>
            <person name="Wang Y."/>
            <person name="Lee K.A."/>
            <person name="Yang V."/>
            <person name="Aguiar M."/>
            <person name="Kornhauser J."/>
            <person name="Jia X."/>
            <person name="Ren J."/>
            <person name="Beausoleil S.A."/>
            <person name="Silva J.C."/>
            <person name="Vemulapalli V."/>
            <person name="Bedford M.T."/>
            <person name="Comb M.J."/>
        </authorList>
    </citation>
    <scope>IDENTIFICATION BY MASS SPECTROMETRY [LARGE SCALE ANALYSIS]</scope>
    <source>
        <tissue>Embryo</tissue>
    </source>
</reference>
<reference key="8">
    <citation type="journal article" date="2015" name="Proc. Natl. Acad. Sci. U.S.A.">
        <title>Folliculin-interacting proteins Fnip1 and Fnip2 play critical roles in kidney tumor suppression in cooperation with Flcn.</title>
        <authorList>
            <person name="Hasumi H."/>
            <person name="Baba M."/>
            <person name="Hasumi Y."/>
            <person name="Lang M."/>
            <person name="Huang Y."/>
            <person name="Oh H.F."/>
            <person name="Matsuo M."/>
            <person name="Merino M.J."/>
            <person name="Yao M."/>
            <person name="Ito Y."/>
            <person name="Furuya M."/>
            <person name="Iribe Y."/>
            <person name="Kodama T."/>
            <person name="Southon E."/>
            <person name="Tessarollo L."/>
            <person name="Nagashima K."/>
            <person name="Haines D.C."/>
            <person name="Linehan W.M."/>
            <person name="Schmidt L.S."/>
        </authorList>
    </citation>
    <scope>DISRUPTION PHENOTYPE</scope>
</reference>
<sequence>MAPTLLQKLFNKRGGGAASAQARPPKEEPAFSWSCSEFGLSDIRLLVYQDCERRGRQVMFDSRAVQKMEEAAAQKAEDVPIKMSARCCQESSSSSGSSSSGSSSSHGFGGSLQHAKQQLPKYQYTRPASDVSMLGEMMFGSVAMSYKGSTLKIHYIRSPPQLMISKVFSATMGSFCGSTNNLQDSFEYINQDPQAGKLNTNQYNLGPFRTGSNLAHSTPVDMPSRGQNEDRDSGIARSASLSSLLITPFPSPSSSTSSSSSYQRRWLRSQTTSLENGIFPRRSTDETFSLAEETCSSNPAMVRRKKIAISIIFSLCEREAAQRDFQDFFFSHFPLFESHMNRLKGAIEKAMISCRKISESSLRVQFYVSRLMEALGEFRGTIWNLYSVPRIAEPVWLTMMSNTLEKNQLCQRFLKEFILLIEQVNKNQFFAALLTAVLTYHLAWVPTVMPVDHPPIKAFSEKRTSQSVNMLAKTHPYNPLWAQLGDLYGAIGSPVRLTRTVVIGKQKDLVQRILYVLTYFLRCSELQENQLSWSGNPSEDDQVINGSKIITALEKGEVEESEYVVVTVSSEPALVPPILPQGTAERRSPEPTVVAEISEGVNTSELGHKPEKNRCKRPEQNSEASSMGFQEAEPDSSWIPQGIFCEDKQNDQEATQDCSSSPPSCEVPRVRRRMDQQTLHSKLHGETLKKRAEQSAAWPCPDRHSQEDPPVEKVTFHIGSSISPESDFESRTKRMEERLKACGHFHGASASASSSMDTGLTQEQQGSGCSFKADFEKDITPQDHSSGGEGVSEDRGLRANMTHAVGQLSQVDGPLAHSLCAAESGRRLLEQTRDVQLKGYKGPSSEPVPNRCRQQGGLLIAADVPYGDASGKGNYRSEGDIPRNESLDSALGDSDDEACVLALLELGHSCDRTEESLEVELPLPRSQSTSKANVRNFGRSLLAGYCATYMPDLVLHGTSSDEKLKQCLAADLVHTVHHPVLDEPIAEAVCIIADTDKWTVQVATSQRKVTDTMKLGQDVLVSSQVSSLLQSILQLYKLHLPADFCIMHLEDRLQEMYLKSKMLSEYLRGHTRVHVKELSVVLGIESNDLPLLTAIASTHSPYVAQILL</sequence>
<keyword id="KW-0963">Cytoplasm</keyword>
<keyword id="KW-0227">DNA damage</keyword>
<keyword id="KW-0458">Lysosome</keyword>
<keyword id="KW-0472">Membrane</keyword>
<keyword id="KW-0597">Phosphoprotein</keyword>
<keyword id="KW-1185">Reference proteome</keyword>
<protein>
    <recommendedName>
        <fullName evidence="10">Folliculin-interacting protein 2</fullName>
    </recommendedName>
    <alternativeName>
        <fullName evidence="9">O6-methylguanine-induced apoptosis 1 protein</fullName>
    </alternativeName>
</protein>
<gene>
    <name evidence="10 12" type="primary">Fnip2</name>
    <name evidence="8" type="synonym">Kiaa1450</name>
    <name evidence="9" type="synonym">Mapo1</name>
</gene>
<name>FNIP2_MOUSE</name>
<feature type="chain" id="PRO_0000320554" description="Folliculin-interacting protein 2">
    <location>
        <begin position="1"/>
        <end position="1108"/>
    </location>
</feature>
<feature type="domain" description="uDENN FNIP1/2-type" evidence="3">
    <location>
        <begin position="38"/>
        <end position="456"/>
    </location>
</feature>
<feature type="domain" description="cDENN FNIP1/2-type" evidence="3">
    <location>
        <begin position="464"/>
        <end position="1034"/>
    </location>
</feature>
<feature type="domain" description="dDENN FNIP1/2-type" evidence="3">
    <location>
        <begin position="1044"/>
        <end position="1099"/>
    </location>
</feature>
<feature type="region of interest" description="Disordered" evidence="4">
    <location>
        <begin position="89"/>
        <end position="112"/>
    </location>
</feature>
<feature type="region of interest" description="Disordered" evidence="4">
    <location>
        <begin position="209"/>
        <end position="233"/>
    </location>
</feature>
<feature type="region of interest" description="Interaction with PRKAA1" evidence="2">
    <location>
        <begin position="540"/>
        <end position="905"/>
    </location>
</feature>
<feature type="region of interest" description="Disordered" evidence="4">
    <location>
        <begin position="598"/>
        <end position="635"/>
    </location>
</feature>
<feature type="region of interest" description="Disordered" evidence="4">
    <location>
        <begin position="649"/>
        <end position="671"/>
    </location>
</feature>
<feature type="compositionally biased region" description="Low complexity" evidence="4">
    <location>
        <begin position="91"/>
        <end position="106"/>
    </location>
</feature>
<feature type="compositionally biased region" description="Basic and acidic residues" evidence="4">
    <location>
        <begin position="606"/>
        <end position="620"/>
    </location>
</feature>
<feature type="compositionally biased region" description="Polar residues" evidence="4">
    <location>
        <begin position="652"/>
        <end position="663"/>
    </location>
</feature>
<feature type="modified residue" description="Phosphoserine" evidence="2">
    <location>
        <position position="212"/>
    </location>
</feature>
<feature type="modified residue" description="Phosphoserine" evidence="2">
    <location>
        <position position="217"/>
    </location>
</feature>
<feature type="modified residue" description="Phosphoserine" evidence="2">
    <location>
        <position position="720"/>
    </location>
</feature>
<feature type="modified residue" description="Phosphoserine" evidence="14">
    <location>
        <position position="721"/>
    </location>
</feature>
<feature type="modified residue" description="Phosphoserine" evidence="13 14">
    <location>
        <position position="723"/>
    </location>
</feature>
<dbReference type="EMBL" id="AC113945">
    <property type="status" value="NOT_ANNOTATED_CDS"/>
    <property type="molecule type" value="Genomic_DNA"/>
</dbReference>
<dbReference type="EMBL" id="AC142502">
    <property type="status" value="NOT_ANNOTATED_CDS"/>
    <property type="molecule type" value="Genomic_DNA"/>
</dbReference>
<dbReference type="EMBL" id="AK122512">
    <property type="protein sequence ID" value="BAC65794.1"/>
    <property type="molecule type" value="mRNA"/>
</dbReference>
<dbReference type="CCDS" id="CCDS50934.1"/>
<dbReference type="RefSeq" id="NP_001156471.1">
    <property type="nucleotide sequence ID" value="NM_001162999.3"/>
</dbReference>
<dbReference type="SMR" id="Q80TD3"/>
<dbReference type="FunCoup" id="Q80TD3">
    <property type="interactions" value="1525"/>
</dbReference>
<dbReference type="STRING" id="10090.ENSMUSP00000075497"/>
<dbReference type="iPTMnet" id="Q80TD3"/>
<dbReference type="PhosphoSitePlus" id="Q80TD3"/>
<dbReference type="PaxDb" id="10090-ENSMUSP00000115275"/>
<dbReference type="ProteomicsDB" id="267610"/>
<dbReference type="Antibodypedia" id="28193">
    <property type="antibodies" value="155 antibodies from 26 providers"/>
</dbReference>
<dbReference type="Ensembl" id="ENSMUST00000076136.7">
    <property type="protein sequence ID" value="ENSMUSP00000075497.5"/>
    <property type="gene ID" value="ENSMUSG00000061175.13"/>
</dbReference>
<dbReference type="GeneID" id="329679"/>
<dbReference type="KEGG" id="mmu:329679"/>
<dbReference type="UCSC" id="uc012cqp.1">
    <property type="organism name" value="mouse"/>
</dbReference>
<dbReference type="AGR" id="MGI:2683054"/>
<dbReference type="CTD" id="57600"/>
<dbReference type="MGI" id="MGI:2683054">
    <property type="gene designation" value="Fnip2"/>
</dbReference>
<dbReference type="VEuPathDB" id="HostDB:ENSMUSG00000061175"/>
<dbReference type="eggNOG" id="KOG3693">
    <property type="taxonomic scope" value="Eukaryota"/>
</dbReference>
<dbReference type="GeneTree" id="ENSGT00390000009391"/>
<dbReference type="InParanoid" id="Q80TD3"/>
<dbReference type="OrthoDB" id="10051712at2759"/>
<dbReference type="PhylomeDB" id="Q80TD3"/>
<dbReference type="Reactome" id="R-MMU-9639288">
    <property type="pathway name" value="Amino acids regulate mTORC1"/>
</dbReference>
<dbReference type="BioGRID-ORCS" id="329679">
    <property type="hits" value="0 hits in 76 CRISPR screens"/>
</dbReference>
<dbReference type="ChiTaRS" id="Fnip2">
    <property type="organism name" value="mouse"/>
</dbReference>
<dbReference type="PRO" id="PR:Q80TD3"/>
<dbReference type="Proteomes" id="UP000000589">
    <property type="component" value="Chromosome 3"/>
</dbReference>
<dbReference type="RNAct" id="Q80TD3">
    <property type="molecule type" value="protein"/>
</dbReference>
<dbReference type="Bgee" id="ENSMUSG00000061175">
    <property type="expression patterns" value="Expressed in decidua and 219 other cell types or tissues"/>
</dbReference>
<dbReference type="ExpressionAtlas" id="Q80TD3">
    <property type="expression patterns" value="baseline and differential"/>
</dbReference>
<dbReference type="GO" id="GO:0005737">
    <property type="term" value="C:cytoplasm"/>
    <property type="evidence" value="ECO:0000314"/>
    <property type="project" value="UniProtKB"/>
</dbReference>
<dbReference type="GO" id="GO:1990877">
    <property type="term" value="C:FNIP-folliculin RagC/D GAP"/>
    <property type="evidence" value="ECO:0000250"/>
    <property type="project" value="UniProtKB"/>
</dbReference>
<dbReference type="GO" id="GO:0005765">
    <property type="term" value="C:lysosomal membrane"/>
    <property type="evidence" value="ECO:0007669"/>
    <property type="project" value="UniProtKB-SubCell"/>
</dbReference>
<dbReference type="GO" id="GO:0042030">
    <property type="term" value="F:ATPase inhibitor activity"/>
    <property type="evidence" value="ECO:0000250"/>
    <property type="project" value="UniProtKB"/>
</dbReference>
<dbReference type="GO" id="GO:0051087">
    <property type="term" value="F:protein-folding chaperone binding"/>
    <property type="evidence" value="ECO:0000250"/>
    <property type="project" value="UniProtKB"/>
</dbReference>
<dbReference type="GO" id="GO:0008630">
    <property type="term" value="P:intrinsic apoptotic signaling pathway in response to DNA damage"/>
    <property type="evidence" value="ECO:0000315"/>
    <property type="project" value="UniProtKB"/>
</dbReference>
<dbReference type="GO" id="GO:0008285">
    <property type="term" value="P:negative regulation of cell population proliferation"/>
    <property type="evidence" value="ECO:0000316"/>
    <property type="project" value="MGI"/>
</dbReference>
<dbReference type="GO" id="GO:0000122">
    <property type="term" value="P:negative regulation of transcription by RNA polymerase II"/>
    <property type="evidence" value="ECO:0000250"/>
    <property type="project" value="UniProtKB"/>
</dbReference>
<dbReference type="GO" id="GO:1904263">
    <property type="term" value="P:positive regulation of TORC1 signaling"/>
    <property type="evidence" value="ECO:0000250"/>
    <property type="project" value="UniProtKB"/>
</dbReference>
<dbReference type="InterPro" id="IPR037545">
    <property type="entry name" value="DENN_FNIP1/2"/>
</dbReference>
<dbReference type="InterPro" id="IPR028086">
    <property type="entry name" value="FNIP_C_dom"/>
</dbReference>
<dbReference type="InterPro" id="IPR026156">
    <property type="entry name" value="FNIP_fam"/>
</dbReference>
<dbReference type="InterPro" id="IPR028085">
    <property type="entry name" value="FNIP_mid_dom"/>
</dbReference>
<dbReference type="InterPro" id="IPR028084">
    <property type="entry name" value="FNIP_N_dom"/>
</dbReference>
<dbReference type="PANTHER" id="PTHR21634:SF11">
    <property type="entry name" value="FOLLICULIN-INTERACTING PROTEIN 2"/>
    <property type="match status" value="1"/>
</dbReference>
<dbReference type="PANTHER" id="PTHR21634">
    <property type="entry name" value="RE13835P"/>
    <property type="match status" value="1"/>
</dbReference>
<dbReference type="Pfam" id="PF14638">
    <property type="entry name" value="FNIP_C"/>
    <property type="match status" value="1"/>
</dbReference>
<dbReference type="Pfam" id="PF14637">
    <property type="entry name" value="FNIP_M"/>
    <property type="match status" value="1"/>
</dbReference>
<dbReference type="Pfam" id="PF14636">
    <property type="entry name" value="FNIP_N"/>
    <property type="match status" value="1"/>
</dbReference>
<dbReference type="PRINTS" id="PR02073">
    <property type="entry name" value="FOLLICULNIP1"/>
</dbReference>
<dbReference type="PROSITE" id="PS51836">
    <property type="entry name" value="DENN_FNIP12"/>
    <property type="match status" value="1"/>
</dbReference>